<feature type="chain" id="PRO_1000052627" description="Large ribosomal subunit protein uL22">
    <location>
        <begin position="1"/>
        <end position="110"/>
    </location>
</feature>
<comment type="function">
    <text evidence="1">This protein binds specifically to 23S rRNA; its binding is stimulated by other ribosomal proteins, e.g. L4, L17, and L20. It is important during the early stages of 50S assembly. It makes multiple contacts with different domains of the 23S rRNA in the assembled 50S subunit and ribosome (By similarity).</text>
</comment>
<comment type="function">
    <text evidence="1">The globular domain of the protein is located near the polypeptide exit tunnel on the outside of the subunit, while an extended beta-hairpin is found that lines the wall of the exit tunnel in the center of the 70S ribosome.</text>
</comment>
<comment type="subunit">
    <text evidence="1">Part of the 50S ribosomal subunit.</text>
</comment>
<comment type="similarity">
    <text evidence="1">Belongs to the universal ribosomal protein uL22 family.</text>
</comment>
<proteinExistence type="inferred from homology"/>
<reference key="1">
    <citation type="submission" date="2007-06" db="EMBL/GenBank/DDBJ databases">
        <authorList>
            <person name="Dodson R.J."/>
            <person name="Harkins D."/>
            <person name="Paulsen I.T."/>
        </authorList>
    </citation>
    <scope>NUCLEOTIDE SEQUENCE [LARGE SCALE GENOMIC DNA]</scope>
    <source>
        <strain>DSM 24068 / PA7</strain>
    </source>
</reference>
<evidence type="ECO:0000255" key="1">
    <source>
        <dbReference type="HAMAP-Rule" id="MF_01331"/>
    </source>
</evidence>
<evidence type="ECO:0000305" key="2"/>
<name>RL22_PSEP7</name>
<protein>
    <recommendedName>
        <fullName evidence="1">Large ribosomal subunit protein uL22</fullName>
    </recommendedName>
    <alternativeName>
        <fullName evidence="2">50S ribosomal protein L22</fullName>
    </alternativeName>
</protein>
<keyword id="KW-0687">Ribonucleoprotein</keyword>
<keyword id="KW-0689">Ribosomal protein</keyword>
<keyword id="KW-0694">RNA-binding</keyword>
<keyword id="KW-0699">rRNA-binding</keyword>
<sequence length="110" mass="11911">MEVAAKLSGARISAQKARLVADQIRGKKVGEALNLLAFSSKKAAEIMKKVLESAVANAEHNEGADVDDLKVSTVFVNEGRSLKRIMPRAKGRADRIVKRSCHITVKVADK</sequence>
<gene>
    <name evidence="1" type="primary">rplV</name>
    <name type="ordered locus">PSPA7_0842</name>
</gene>
<accession>A6UZJ3</accession>
<dbReference type="EMBL" id="CP000744">
    <property type="protein sequence ID" value="ABR81237.1"/>
    <property type="molecule type" value="Genomic_DNA"/>
</dbReference>
<dbReference type="RefSeq" id="WP_003103908.1">
    <property type="nucleotide sequence ID" value="NC_009656.1"/>
</dbReference>
<dbReference type="SMR" id="A6UZJ3"/>
<dbReference type="GeneID" id="98636788"/>
<dbReference type="KEGG" id="pap:PSPA7_0842"/>
<dbReference type="HOGENOM" id="CLU_083987_3_3_6"/>
<dbReference type="Proteomes" id="UP000001582">
    <property type="component" value="Chromosome"/>
</dbReference>
<dbReference type="GO" id="GO:0022625">
    <property type="term" value="C:cytosolic large ribosomal subunit"/>
    <property type="evidence" value="ECO:0007669"/>
    <property type="project" value="TreeGrafter"/>
</dbReference>
<dbReference type="GO" id="GO:0019843">
    <property type="term" value="F:rRNA binding"/>
    <property type="evidence" value="ECO:0007669"/>
    <property type="project" value="UniProtKB-UniRule"/>
</dbReference>
<dbReference type="GO" id="GO:0003735">
    <property type="term" value="F:structural constituent of ribosome"/>
    <property type="evidence" value="ECO:0007669"/>
    <property type="project" value="InterPro"/>
</dbReference>
<dbReference type="GO" id="GO:0006412">
    <property type="term" value="P:translation"/>
    <property type="evidence" value="ECO:0007669"/>
    <property type="project" value="UniProtKB-UniRule"/>
</dbReference>
<dbReference type="CDD" id="cd00336">
    <property type="entry name" value="Ribosomal_L22"/>
    <property type="match status" value="1"/>
</dbReference>
<dbReference type="FunFam" id="3.90.470.10:FF:000001">
    <property type="entry name" value="50S ribosomal protein L22"/>
    <property type="match status" value="1"/>
</dbReference>
<dbReference type="Gene3D" id="3.90.470.10">
    <property type="entry name" value="Ribosomal protein L22/L17"/>
    <property type="match status" value="1"/>
</dbReference>
<dbReference type="HAMAP" id="MF_01331_B">
    <property type="entry name" value="Ribosomal_uL22_B"/>
    <property type="match status" value="1"/>
</dbReference>
<dbReference type="InterPro" id="IPR001063">
    <property type="entry name" value="Ribosomal_uL22"/>
</dbReference>
<dbReference type="InterPro" id="IPR005727">
    <property type="entry name" value="Ribosomal_uL22_bac/chlpt-type"/>
</dbReference>
<dbReference type="InterPro" id="IPR047867">
    <property type="entry name" value="Ribosomal_uL22_bac/org-type"/>
</dbReference>
<dbReference type="InterPro" id="IPR018260">
    <property type="entry name" value="Ribosomal_uL22_CS"/>
</dbReference>
<dbReference type="InterPro" id="IPR036394">
    <property type="entry name" value="Ribosomal_uL22_sf"/>
</dbReference>
<dbReference type="NCBIfam" id="TIGR01044">
    <property type="entry name" value="rplV_bact"/>
    <property type="match status" value="1"/>
</dbReference>
<dbReference type="PANTHER" id="PTHR13501">
    <property type="entry name" value="CHLOROPLAST 50S RIBOSOMAL PROTEIN L22-RELATED"/>
    <property type="match status" value="1"/>
</dbReference>
<dbReference type="PANTHER" id="PTHR13501:SF8">
    <property type="entry name" value="LARGE RIBOSOMAL SUBUNIT PROTEIN UL22M"/>
    <property type="match status" value="1"/>
</dbReference>
<dbReference type="Pfam" id="PF00237">
    <property type="entry name" value="Ribosomal_L22"/>
    <property type="match status" value="1"/>
</dbReference>
<dbReference type="SUPFAM" id="SSF54843">
    <property type="entry name" value="Ribosomal protein L22"/>
    <property type="match status" value="1"/>
</dbReference>
<dbReference type="PROSITE" id="PS00464">
    <property type="entry name" value="RIBOSOMAL_L22"/>
    <property type="match status" value="1"/>
</dbReference>
<organism>
    <name type="scientific">Pseudomonas paraeruginosa (strain DSM 24068 / PA7)</name>
    <name type="common">Pseudomonas aeruginosa (strain PA7)</name>
    <dbReference type="NCBI Taxonomy" id="381754"/>
    <lineage>
        <taxon>Bacteria</taxon>
        <taxon>Pseudomonadati</taxon>
        <taxon>Pseudomonadota</taxon>
        <taxon>Gammaproteobacteria</taxon>
        <taxon>Pseudomonadales</taxon>
        <taxon>Pseudomonadaceae</taxon>
        <taxon>Pseudomonas</taxon>
        <taxon>Pseudomonas paraeruginosa</taxon>
    </lineage>
</organism>